<dbReference type="EMBL" id="BX571857">
    <property type="protein sequence ID" value="CAG43778.1"/>
    <property type="molecule type" value="Genomic_DNA"/>
</dbReference>
<dbReference type="RefSeq" id="WP_001052491.1">
    <property type="nucleotide sequence ID" value="NC_002953.3"/>
</dbReference>
<dbReference type="SMR" id="Q6G7P3"/>
<dbReference type="KEGG" id="sas:SAS1971"/>
<dbReference type="HOGENOM" id="CLU_115403_9_3_9"/>
<dbReference type="GO" id="GO:0043856">
    <property type="term" value="F:anti-sigma factor antagonist activity"/>
    <property type="evidence" value="ECO:0007669"/>
    <property type="project" value="InterPro"/>
</dbReference>
<dbReference type="CDD" id="cd07043">
    <property type="entry name" value="STAS_anti-anti-sigma_factors"/>
    <property type="match status" value="1"/>
</dbReference>
<dbReference type="FunFam" id="3.30.750.24:FF:000001">
    <property type="entry name" value="Anti-sigma factor antagonist"/>
    <property type="match status" value="1"/>
</dbReference>
<dbReference type="Gene3D" id="3.30.750.24">
    <property type="entry name" value="STAS domain"/>
    <property type="match status" value="1"/>
</dbReference>
<dbReference type="InterPro" id="IPR003658">
    <property type="entry name" value="Anti-sigma_ant"/>
</dbReference>
<dbReference type="InterPro" id="IPR002645">
    <property type="entry name" value="STAS_dom"/>
</dbReference>
<dbReference type="InterPro" id="IPR036513">
    <property type="entry name" value="STAS_dom_sf"/>
</dbReference>
<dbReference type="NCBIfam" id="TIGR00377">
    <property type="entry name" value="ant_ant_sig"/>
    <property type="match status" value="1"/>
</dbReference>
<dbReference type="PANTHER" id="PTHR33495">
    <property type="entry name" value="ANTI-SIGMA FACTOR ANTAGONIST TM_1081-RELATED-RELATED"/>
    <property type="match status" value="1"/>
</dbReference>
<dbReference type="PANTHER" id="PTHR33495:SF9">
    <property type="entry name" value="ANTI-SIGMA-B FACTOR ANTAGONIST"/>
    <property type="match status" value="1"/>
</dbReference>
<dbReference type="Pfam" id="PF01740">
    <property type="entry name" value="STAS"/>
    <property type="match status" value="1"/>
</dbReference>
<dbReference type="SUPFAM" id="SSF52091">
    <property type="entry name" value="SpoIIaa-like"/>
    <property type="match status" value="1"/>
</dbReference>
<dbReference type="PROSITE" id="PS50801">
    <property type="entry name" value="STAS"/>
    <property type="match status" value="1"/>
</dbReference>
<evidence type="ECO:0000250" key="1"/>
<evidence type="ECO:0000255" key="2">
    <source>
        <dbReference type="PROSITE-ProRule" id="PRU00198"/>
    </source>
</evidence>
<evidence type="ECO:0000305" key="3"/>
<accession>Q6G7P3</accession>
<reference key="1">
    <citation type="journal article" date="2004" name="Proc. Natl. Acad. Sci. U.S.A.">
        <title>Complete genomes of two clinical Staphylococcus aureus strains: evidence for the rapid evolution of virulence and drug resistance.</title>
        <authorList>
            <person name="Holden M.T.G."/>
            <person name="Feil E.J."/>
            <person name="Lindsay J.A."/>
            <person name="Peacock S.J."/>
            <person name="Day N.P.J."/>
            <person name="Enright M.C."/>
            <person name="Foster T.J."/>
            <person name="Moore C.E."/>
            <person name="Hurst L."/>
            <person name="Atkin R."/>
            <person name="Barron A."/>
            <person name="Bason N."/>
            <person name="Bentley S.D."/>
            <person name="Chillingworth C."/>
            <person name="Chillingworth T."/>
            <person name="Churcher C."/>
            <person name="Clark L."/>
            <person name="Corton C."/>
            <person name="Cronin A."/>
            <person name="Doggett J."/>
            <person name="Dowd L."/>
            <person name="Feltwell T."/>
            <person name="Hance Z."/>
            <person name="Harris B."/>
            <person name="Hauser H."/>
            <person name="Holroyd S."/>
            <person name="Jagels K."/>
            <person name="James K.D."/>
            <person name="Lennard N."/>
            <person name="Line A."/>
            <person name="Mayes R."/>
            <person name="Moule S."/>
            <person name="Mungall K."/>
            <person name="Ormond D."/>
            <person name="Quail M.A."/>
            <person name="Rabbinowitsch E."/>
            <person name="Rutherford K.M."/>
            <person name="Sanders M."/>
            <person name="Sharp S."/>
            <person name="Simmonds M."/>
            <person name="Stevens K."/>
            <person name="Whitehead S."/>
            <person name="Barrell B.G."/>
            <person name="Spratt B.G."/>
            <person name="Parkhill J."/>
        </authorList>
    </citation>
    <scope>NUCLEOTIDE SEQUENCE [LARGE SCALE GENOMIC DNA]</scope>
    <source>
        <strain>MSSA476</strain>
    </source>
</reference>
<comment type="function">
    <text evidence="1">Positive regulator of sigma-B activity. Non-phosphorylated RsbV binds to RsbW, preventing its association with sigma-B. When phosphorylated, releases RsbW, which is then free to complex with and inactivate sigma-B (By similarity).</text>
</comment>
<comment type="PTM">
    <text evidence="1">Phosphorylated by RsbW on a serine residue.</text>
</comment>
<comment type="similarity">
    <text evidence="3">Belongs to the anti-sigma-factor antagonist family.</text>
</comment>
<keyword id="KW-0597">Phosphoprotein</keyword>
<name>RSBV_STAAS</name>
<organism>
    <name type="scientific">Staphylococcus aureus (strain MSSA476)</name>
    <dbReference type="NCBI Taxonomy" id="282459"/>
    <lineage>
        <taxon>Bacteria</taxon>
        <taxon>Bacillati</taxon>
        <taxon>Bacillota</taxon>
        <taxon>Bacilli</taxon>
        <taxon>Bacillales</taxon>
        <taxon>Staphylococcaceae</taxon>
        <taxon>Staphylococcus</taxon>
    </lineage>
</organism>
<protein>
    <recommendedName>
        <fullName>Anti-sigma-B factor antagonist</fullName>
    </recommendedName>
    <alternativeName>
        <fullName>Anti-anti-sigma-B factor</fullName>
    </alternativeName>
</protein>
<feature type="chain" id="PRO_0000194192" description="Anti-sigma-B factor antagonist">
    <location>
        <begin position="1"/>
        <end position="108"/>
    </location>
</feature>
<feature type="domain" description="STAS" evidence="2">
    <location>
        <begin position="3"/>
        <end position="108"/>
    </location>
</feature>
<feature type="modified residue" description="Phosphoserine" evidence="1">
    <location>
        <position position="57"/>
    </location>
</feature>
<sequence>MNLNIETTTQDKFYEVKVGGELDVYTVPELEEVLTPMRQDGTRDIYVNLENVSYMDSTGLGLFVGTLKALNQNDKELYILGVSDRIGRLFEITGLKDLMHVNEGTEVE</sequence>
<gene>
    <name type="primary">rsbV</name>
    <name type="ordered locus">SAS1971</name>
</gene>
<proteinExistence type="inferred from homology"/>